<keyword id="KW-0413">Isomerase</keyword>
<keyword id="KW-0460">Magnesium</keyword>
<keyword id="KW-0479">Metal-binding</keyword>
<keyword id="KW-0597">Phosphoprotein</keyword>
<keyword id="KW-1185">Reference proteome</keyword>
<name>GLMM_PELUB</name>
<gene>
    <name evidence="1" type="primary">glmM</name>
    <name type="ordered locus">SAR11_0603</name>
</gene>
<reference key="1">
    <citation type="journal article" date="2005" name="Science">
        <title>Genome streamlining in a cosmopolitan oceanic bacterium.</title>
        <authorList>
            <person name="Giovannoni S.J."/>
            <person name="Tripp H.J."/>
            <person name="Givan S."/>
            <person name="Podar M."/>
            <person name="Vergin K.L."/>
            <person name="Baptista D."/>
            <person name="Bibbs L."/>
            <person name="Eads J."/>
            <person name="Richardson T.H."/>
            <person name="Noordewier M."/>
            <person name="Rappe M.S."/>
            <person name="Short J.M."/>
            <person name="Carrington J.C."/>
            <person name="Mathur E.J."/>
        </authorList>
    </citation>
    <scope>NUCLEOTIDE SEQUENCE [LARGE SCALE GENOMIC DNA]</scope>
    <source>
        <strain>HTCC1062</strain>
    </source>
</reference>
<proteinExistence type="inferred from homology"/>
<sequence>MAKKYFGTDGIRGAVNSKNINGDMFFKFGLATGTYFKTQKKKKQIAIIAKDTRLSGYSLEPALVSGLTSAGMHVYTLGPLPTNGLAMLTKSMKANMGIMITASHNPYHDNGLKLFGPDGLKLSNKIEKKIETLIDQKIEKSLSKPKKLGRVKRLETANKDYIKILKNNLPKDFNLRGLRIVIDCANGAGYKAGPELLKSLGAKVFSIGINPNGLNINKNCGSTFPNKIRLAVKRYKAHIGISLDGDADRIIMCDEKGIVIDGDQIIAAIAMRWKRKKMLKGGVVGTLMSNYGLEKFFKLHNIKFLRSNVGDRFVKEKMQKNNFNLGGEQSGHIILGKFATTGDGLLVALEVLFSLRKGKKASSFFNTFNKTPQILENIDVKDKNIIKNIDIKNSIKLAEKLIKGQGRILVRSSGTESKIRVMGESDNIKLLQKCLKIVLRKIK</sequence>
<evidence type="ECO:0000255" key="1">
    <source>
        <dbReference type="HAMAP-Rule" id="MF_01554"/>
    </source>
</evidence>
<comment type="function">
    <text evidence="1">Catalyzes the conversion of glucosamine-6-phosphate to glucosamine-1-phosphate.</text>
</comment>
<comment type="catalytic activity">
    <reaction evidence="1">
        <text>alpha-D-glucosamine 1-phosphate = D-glucosamine 6-phosphate</text>
        <dbReference type="Rhea" id="RHEA:23424"/>
        <dbReference type="ChEBI" id="CHEBI:58516"/>
        <dbReference type="ChEBI" id="CHEBI:58725"/>
        <dbReference type="EC" id="5.4.2.10"/>
    </reaction>
</comment>
<comment type="cofactor">
    <cofactor evidence="1">
        <name>Mg(2+)</name>
        <dbReference type="ChEBI" id="CHEBI:18420"/>
    </cofactor>
    <text evidence="1">Binds 1 Mg(2+) ion per subunit.</text>
</comment>
<comment type="PTM">
    <text evidence="1">Activated by phosphorylation.</text>
</comment>
<comment type="similarity">
    <text evidence="1">Belongs to the phosphohexose mutase family.</text>
</comment>
<protein>
    <recommendedName>
        <fullName evidence="1">Phosphoglucosamine mutase</fullName>
        <ecNumber evidence="1">5.4.2.10</ecNumber>
    </recommendedName>
</protein>
<dbReference type="EC" id="5.4.2.10" evidence="1"/>
<dbReference type="EMBL" id="CP000084">
    <property type="protein sequence ID" value="AAZ21424.1"/>
    <property type="molecule type" value="Genomic_DNA"/>
</dbReference>
<dbReference type="RefSeq" id="WP_011281806.1">
    <property type="nucleotide sequence ID" value="NC_007205.1"/>
</dbReference>
<dbReference type="SMR" id="Q4FN15"/>
<dbReference type="STRING" id="335992.SAR11_0603"/>
<dbReference type="GeneID" id="66295108"/>
<dbReference type="KEGG" id="pub:SAR11_0603"/>
<dbReference type="eggNOG" id="COG1109">
    <property type="taxonomic scope" value="Bacteria"/>
</dbReference>
<dbReference type="HOGENOM" id="CLU_016950_7_0_5"/>
<dbReference type="OrthoDB" id="9803322at2"/>
<dbReference type="Proteomes" id="UP000002528">
    <property type="component" value="Chromosome"/>
</dbReference>
<dbReference type="GO" id="GO:0005829">
    <property type="term" value="C:cytosol"/>
    <property type="evidence" value="ECO:0007669"/>
    <property type="project" value="TreeGrafter"/>
</dbReference>
<dbReference type="GO" id="GO:0000287">
    <property type="term" value="F:magnesium ion binding"/>
    <property type="evidence" value="ECO:0007669"/>
    <property type="project" value="UniProtKB-UniRule"/>
</dbReference>
<dbReference type="GO" id="GO:0008966">
    <property type="term" value="F:phosphoglucosamine mutase activity"/>
    <property type="evidence" value="ECO:0007669"/>
    <property type="project" value="UniProtKB-UniRule"/>
</dbReference>
<dbReference type="GO" id="GO:0004615">
    <property type="term" value="F:phosphomannomutase activity"/>
    <property type="evidence" value="ECO:0007669"/>
    <property type="project" value="TreeGrafter"/>
</dbReference>
<dbReference type="GO" id="GO:0005975">
    <property type="term" value="P:carbohydrate metabolic process"/>
    <property type="evidence" value="ECO:0007669"/>
    <property type="project" value="InterPro"/>
</dbReference>
<dbReference type="GO" id="GO:0009252">
    <property type="term" value="P:peptidoglycan biosynthetic process"/>
    <property type="evidence" value="ECO:0007669"/>
    <property type="project" value="TreeGrafter"/>
</dbReference>
<dbReference type="GO" id="GO:0006048">
    <property type="term" value="P:UDP-N-acetylglucosamine biosynthetic process"/>
    <property type="evidence" value="ECO:0007669"/>
    <property type="project" value="TreeGrafter"/>
</dbReference>
<dbReference type="CDD" id="cd05802">
    <property type="entry name" value="GlmM"/>
    <property type="match status" value="1"/>
</dbReference>
<dbReference type="FunFam" id="3.40.120.10:FF:000001">
    <property type="entry name" value="Phosphoglucosamine mutase"/>
    <property type="match status" value="1"/>
</dbReference>
<dbReference type="FunFam" id="3.40.120.10:FF:000003">
    <property type="entry name" value="Phosphoglucosamine mutase"/>
    <property type="match status" value="1"/>
</dbReference>
<dbReference type="Gene3D" id="3.40.120.10">
    <property type="entry name" value="Alpha-D-Glucose-1,6-Bisphosphate, subunit A, domain 3"/>
    <property type="match status" value="3"/>
</dbReference>
<dbReference type="Gene3D" id="3.30.310.50">
    <property type="entry name" value="Alpha-D-phosphohexomutase, C-terminal domain"/>
    <property type="match status" value="1"/>
</dbReference>
<dbReference type="HAMAP" id="MF_01554_B">
    <property type="entry name" value="GlmM_B"/>
    <property type="match status" value="1"/>
</dbReference>
<dbReference type="InterPro" id="IPR005844">
    <property type="entry name" value="A-D-PHexomutase_a/b/a-I"/>
</dbReference>
<dbReference type="InterPro" id="IPR016055">
    <property type="entry name" value="A-D-PHexomutase_a/b/a-I/II/III"/>
</dbReference>
<dbReference type="InterPro" id="IPR005845">
    <property type="entry name" value="A-D-PHexomutase_a/b/a-II"/>
</dbReference>
<dbReference type="InterPro" id="IPR005846">
    <property type="entry name" value="A-D-PHexomutase_a/b/a-III"/>
</dbReference>
<dbReference type="InterPro" id="IPR005843">
    <property type="entry name" value="A-D-PHexomutase_C"/>
</dbReference>
<dbReference type="InterPro" id="IPR036900">
    <property type="entry name" value="A-D-PHexomutase_C_sf"/>
</dbReference>
<dbReference type="InterPro" id="IPR016066">
    <property type="entry name" value="A-D-PHexomutase_CS"/>
</dbReference>
<dbReference type="InterPro" id="IPR005841">
    <property type="entry name" value="Alpha-D-phosphohexomutase_SF"/>
</dbReference>
<dbReference type="InterPro" id="IPR006352">
    <property type="entry name" value="GlmM_bact"/>
</dbReference>
<dbReference type="InterPro" id="IPR050060">
    <property type="entry name" value="Phosphoglucosamine_mutase"/>
</dbReference>
<dbReference type="NCBIfam" id="TIGR01455">
    <property type="entry name" value="glmM"/>
    <property type="match status" value="1"/>
</dbReference>
<dbReference type="NCBIfam" id="NF008139">
    <property type="entry name" value="PRK10887.1"/>
    <property type="match status" value="1"/>
</dbReference>
<dbReference type="PANTHER" id="PTHR42946:SF1">
    <property type="entry name" value="PHOSPHOGLUCOMUTASE (ALPHA-D-GLUCOSE-1,6-BISPHOSPHATE-DEPENDENT)"/>
    <property type="match status" value="1"/>
</dbReference>
<dbReference type="PANTHER" id="PTHR42946">
    <property type="entry name" value="PHOSPHOHEXOSE MUTASE"/>
    <property type="match status" value="1"/>
</dbReference>
<dbReference type="Pfam" id="PF02878">
    <property type="entry name" value="PGM_PMM_I"/>
    <property type="match status" value="1"/>
</dbReference>
<dbReference type="Pfam" id="PF02879">
    <property type="entry name" value="PGM_PMM_II"/>
    <property type="match status" value="1"/>
</dbReference>
<dbReference type="Pfam" id="PF02880">
    <property type="entry name" value="PGM_PMM_III"/>
    <property type="match status" value="1"/>
</dbReference>
<dbReference type="Pfam" id="PF00408">
    <property type="entry name" value="PGM_PMM_IV"/>
    <property type="match status" value="1"/>
</dbReference>
<dbReference type="PRINTS" id="PR00509">
    <property type="entry name" value="PGMPMM"/>
</dbReference>
<dbReference type="SUPFAM" id="SSF55957">
    <property type="entry name" value="Phosphoglucomutase, C-terminal domain"/>
    <property type="match status" value="1"/>
</dbReference>
<dbReference type="SUPFAM" id="SSF53738">
    <property type="entry name" value="Phosphoglucomutase, first 3 domains"/>
    <property type="match status" value="3"/>
</dbReference>
<dbReference type="PROSITE" id="PS00710">
    <property type="entry name" value="PGM_PMM"/>
    <property type="match status" value="1"/>
</dbReference>
<feature type="chain" id="PRO_0000147930" description="Phosphoglucosamine mutase">
    <location>
        <begin position="1"/>
        <end position="443"/>
    </location>
</feature>
<feature type="active site" description="Phosphoserine intermediate" evidence="1">
    <location>
        <position position="103"/>
    </location>
</feature>
<feature type="binding site" description="via phosphate group" evidence="1">
    <location>
        <position position="103"/>
    </location>
    <ligand>
        <name>Mg(2+)</name>
        <dbReference type="ChEBI" id="CHEBI:18420"/>
    </ligand>
</feature>
<feature type="binding site" evidence="1">
    <location>
        <position position="244"/>
    </location>
    <ligand>
        <name>Mg(2+)</name>
        <dbReference type="ChEBI" id="CHEBI:18420"/>
    </ligand>
</feature>
<feature type="binding site" evidence="1">
    <location>
        <position position="246"/>
    </location>
    <ligand>
        <name>Mg(2+)</name>
        <dbReference type="ChEBI" id="CHEBI:18420"/>
    </ligand>
</feature>
<feature type="binding site" evidence="1">
    <location>
        <position position="248"/>
    </location>
    <ligand>
        <name>Mg(2+)</name>
        <dbReference type="ChEBI" id="CHEBI:18420"/>
    </ligand>
</feature>
<feature type="modified residue" description="Phosphoserine" evidence="1">
    <location>
        <position position="103"/>
    </location>
</feature>
<organism>
    <name type="scientific">Pelagibacter ubique (strain HTCC1062)</name>
    <dbReference type="NCBI Taxonomy" id="335992"/>
    <lineage>
        <taxon>Bacteria</taxon>
        <taxon>Pseudomonadati</taxon>
        <taxon>Pseudomonadota</taxon>
        <taxon>Alphaproteobacteria</taxon>
        <taxon>Candidatus Pelagibacterales</taxon>
        <taxon>Candidatus Pelagibacteraceae</taxon>
        <taxon>Candidatus Pelagibacter</taxon>
    </lineage>
</organism>
<accession>Q4FN15</accession>